<protein>
    <recommendedName>
        <fullName evidence="1">Photosystem II reaction center protein I</fullName>
        <shortName evidence="1">PSII-I</shortName>
    </recommendedName>
    <alternativeName>
        <fullName evidence="1">PSII 4.8 kDa protein</fullName>
    </alternativeName>
</protein>
<reference key="1">
    <citation type="submission" date="2007-11" db="EMBL/GenBank/DDBJ databases">
        <title>The complete chloroplast genome of Acorus americanus.</title>
        <authorList>
            <person name="Peery R.M."/>
            <person name="Chumley T.W."/>
            <person name="Kuehl J.V."/>
            <person name="Boore J.L."/>
            <person name="Raubeson L.A."/>
        </authorList>
    </citation>
    <scope>NUCLEOTIDE SEQUENCE [LARGE SCALE GENOMIC DNA]</scope>
</reference>
<geneLocation type="chloroplast"/>
<keyword id="KW-0150">Chloroplast</keyword>
<keyword id="KW-0472">Membrane</keyword>
<keyword id="KW-0602">Photosynthesis</keyword>
<keyword id="KW-0604">Photosystem II</keyword>
<keyword id="KW-0934">Plastid</keyword>
<keyword id="KW-0674">Reaction center</keyword>
<keyword id="KW-0793">Thylakoid</keyword>
<keyword id="KW-0812">Transmembrane</keyword>
<keyword id="KW-1133">Transmembrane helix</keyword>
<comment type="function">
    <text evidence="1">One of the components of the core complex of photosystem II (PSII), required for its stability and/or assembly. PSII is a light-driven water:plastoquinone oxidoreductase that uses light energy to abstract electrons from H(2)O, generating O(2) and a proton gradient subsequently used for ATP formation. It consists of a core antenna complex that captures photons, and an electron transfer chain that converts photonic excitation into a charge separation.</text>
</comment>
<comment type="subunit">
    <text evidence="1">PSII is composed of 1 copy each of membrane proteins PsbA, PsbB, PsbC, PsbD, PsbE, PsbF, PsbH, PsbI, PsbJ, PsbK, PsbL, PsbM, PsbT, PsbX, PsbY, PsbZ, Psb30/Ycf12, at least 3 peripheral proteins of the oxygen-evolving complex and a large number of cofactors. It forms dimeric complexes.</text>
</comment>
<comment type="subcellular location">
    <subcellularLocation>
        <location evidence="1">Plastid</location>
        <location evidence="1">Chloroplast thylakoid membrane</location>
        <topology evidence="1">Single-pass membrane protein</topology>
    </subcellularLocation>
</comment>
<comment type="similarity">
    <text evidence="1">Belongs to the PsbI family.</text>
</comment>
<sequence>MLTLKLFVYTVVIFFVSLFIFGFLSNDPGRNPGREE</sequence>
<dbReference type="EMBL" id="EU273602">
    <property type="protein sequence ID" value="ABX38728.1"/>
    <property type="molecule type" value="Genomic_DNA"/>
</dbReference>
<dbReference type="RefSeq" id="YP_001586166.1">
    <property type="nucleotide sequence ID" value="NC_010093.1"/>
</dbReference>
<dbReference type="SMR" id="A9LYG9"/>
<dbReference type="GeneID" id="5777750"/>
<dbReference type="GO" id="GO:0009535">
    <property type="term" value="C:chloroplast thylakoid membrane"/>
    <property type="evidence" value="ECO:0007669"/>
    <property type="project" value="UniProtKB-SubCell"/>
</dbReference>
<dbReference type="GO" id="GO:0009539">
    <property type="term" value="C:photosystem II reaction center"/>
    <property type="evidence" value="ECO:0007669"/>
    <property type="project" value="InterPro"/>
</dbReference>
<dbReference type="GO" id="GO:0015979">
    <property type="term" value="P:photosynthesis"/>
    <property type="evidence" value="ECO:0007669"/>
    <property type="project" value="UniProtKB-UniRule"/>
</dbReference>
<dbReference type="HAMAP" id="MF_01316">
    <property type="entry name" value="PSII_PsbI"/>
    <property type="match status" value="1"/>
</dbReference>
<dbReference type="InterPro" id="IPR003686">
    <property type="entry name" value="PSII_PsbI"/>
</dbReference>
<dbReference type="InterPro" id="IPR037271">
    <property type="entry name" value="PSII_PsbI_sf"/>
</dbReference>
<dbReference type="NCBIfam" id="NF002735">
    <property type="entry name" value="PRK02655.1"/>
    <property type="match status" value="1"/>
</dbReference>
<dbReference type="PANTHER" id="PTHR35772">
    <property type="entry name" value="PHOTOSYSTEM II REACTION CENTER PROTEIN I"/>
    <property type="match status" value="1"/>
</dbReference>
<dbReference type="PANTHER" id="PTHR35772:SF1">
    <property type="entry name" value="PHOTOSYSTEM II REACTION CENTER PROTEIN I"/>
    <property type="match status" value="1"/>
</dbReference>
<dbReference type="Pfam" id="PF02532">
    <property type="entry name" value="PsbI"/>
    <property type="match status" value="1"/>
</dbReference>
<dbReference type="SUPFAM" id="SSF161041">
    <property type="entry name" value="Photosystem II reaction center protein I, PsbI"/>
    <property type="match status" value="1"/>
</dbReference>
<evidence type="ECO:0000255" key="1">
    <source>
        <dbReference type="HAMAP-Rule" id="MF_01316"/>
    </source>
</evidence>
<gene>
    <name evidence="1" type="primary">psbI</name>
</gene>
<name>PSBI_ACOCI</name>
<proteinExistence type="inferred from homology"/>
<accession>A9LYG9</accession>
<organism>
    <name type="scientific">Acorus calamus var. americanus</name>
    <name type="common">American sweet flag</name>
    <name type="synonym">Acorus americanus</name>
    <dbReference type="NCBI Taxonomy" id="263995"/>
    <lineage>
        <taxon>Eukaryota</taxon>
        <taxon>Viridiplantae</taxon>
        <taxon>Streptophyta</taxon>
        <taxon>Embryophyta</taxon>
        <taxon>Tracheophyta</taxon>
        <taxon>Spermatophyta</taxon>
        <taxon>Magnoliopsida</taxon>
        <taxon>Liliopsida</taxon>
        <taxon>Acoraceae</taxon>
        <taxon>Acorus</taxon>
    </lineage>
</organism>
<feature type="chain" id="PRO_0000353216" description="Photosystem II reaction center protein I">
    <location>
        <begin position="1"/>
        <end position="36"/>
    </location>
</feature>
<feature type="transmembrane region" description="Helical" evidence="1">
    <location>
        <begin position="4"/>
        <end position="24"/>
    </location>
</feature>